<dbReference type="EMBL" id="Z35829">
    <property type="status" value="NOT_ANNOTATED_CDS"/>
    <property type="molecule type" value="Genomic_DNA"/>
</dbReference>
<dbReference type="EMBL" id="Z35831">
    <property type="status" value="NOT_ANNOTATED_CDS"/>
    <property type="molecule type" value="Genomic_DNA"/>
</dbReference>
<dbReference type="SMR" id="P0C5L1"/>
<dbReference type="STRING" id="4932.YBL068W-A"/>
<dbReference type="iPTMnet" id="P0C5L1"/>
<dbReference type="PaxDb" id="4932-YBL068W-A"/>
<dbReference type="EnsemblFungi" id="YBL068W-A_mRNA">
    <property type="protein sequence ID" value="YBL068W-A"/>
    <property type="gene ID" value="YBL068W-A"/>
</dbReference>
<dbReference type="AGR" id="SGD:S000028530"/>
<dbReference type="SGD" id="S000028530">
    <property type="gene designation" value="YBL068W-A"/>
</dbReference>
<dbReference type="eggNOG" id="KOG1198">
    <property type="taxonomic scope" value="Eukaryota"/>
</dbReference>
<dbReference type="GeneTree" id="ENSGT00940000176396"/>
<dbReference type="HOGENOM" id="CLU_2623891_0_0_1"/>
<dbReference type="FunFam" id="3.90.180.10:FF:000039">
    <property type="entry name" value="Ast1p"/>
    <property type="match status" value="1"/>
</dbReference>
<dbReference type="Gene3D" id="3.90.180.10">
    <property type="entry name" value="Medium-chain alcohol dehydrogenases, catalytic domain"/>
    <property type="match status" value="1"/>
</dbReference>
<dbReference type="Gene3D" id="3.40.50.720">
    <property type="entry name" value="NAD(P)-binding Rossmann-like Domain"/>
    <property type="match status" value="1"/>
</dbReference>
<dbReference type="Pfam" id="PF13602">
    <property type="entry name" value="ADH_zinc_N_2"/>
    <property type="match status" value="1"/>
</dbReference>
<proteinExistence type="uncertain"/>
<accession>P0C5L1</accession>
<sequence length="78" mass="9173">MFGSIIWSYNYTHYYFDPNAKTASANNDWIEQCGDFLKNGTVKCVVDKVYDWKDHKEAFSYMATQRAQGKLIMNVEKF</sequence>
<feature type="chain" id="PRO_0000309009" description="Putative uncharacterized protein YBL068W-A">
    <location>
        <begin position="1"/>
        <end position="78"/>
    </location>
</feature>
<protein>
    <recommendedName>
        <fullName>Putative uncharacterized protein YBL068W-A</fullName>
    </recommendedName>
</protein>
<comment type="miscellaneous">
    <text evidence="1">Partially overlaps AST1.</text>
</comment>
<comment type="caution">
    <text evidence="2">Product of a dubious gene prediction unlikely to encode a functional protein. Because of that it is not part of the S.cerevisiae S288c complete/reference proteome set.</text>
</comment>
<evidence type="ECO:0000305" key="1"/>
<evidence type="ECO:0000305" key="2">
    <source>
    </source>
</evidence>
<name>YB068_YEAST</name>
<reference key="1">
    <citation type="journal article" date="1994" name="EMBO J.">
        <title>Complete DNA sequence of yeast chromosome II.</title>
        <authorList>
            <person name="Feldmann H."/>
            <person name="Aigle M."/>
            <person name="Aljinovic G."/>
            <person name="Andre B."/>
            <person name="Baclet M.C."/>
            <person name="Barthe C."/>
            <person name="Baur A."/>
            <person name="Becam A.-M."/>
            <person name="Biteau N."/>
            <person name="Boles E."/>
            <person name="Brandt T."/>
            <person name="Brendel M."/>
            <person name="Brueckner M."/>
            <person name="Bussereau F."/>
            <person name="Christiansen C."/>
            <person name="Contreras R."/>
            <person name="Crouzet M."/>
            <person name="Cziepluch C."/>
            <person name="Demolis N."/>
            <person name="Delaveau T."/>
            <person name="Doignon F."/>
            <person name="Domdey H."/>
            <person name="Duesterhus S."/>
            <person name="Dubois E."/>
            <person name="Dujon B."/>
            <person name="El Bakkoury M."/>
            <person name="Entian K.-D."/>
            <person name="Feuermann M."/>
            <person name="Fiers W."/>
            <person name="Fobo G.M."/>
            <person name="Fritz C."/>
            <person name="Gassenhuber J."/>
            <person name="Glansdorff N."/>
            <person name="Goffeau A."/>
            <person name="Grivell L.A."/>
            <person name="de Haan M."/>
            <person name="Hein C."/>
            <person name="Herbert C.J."/>
            <person name="Hollenberg C.P."/>
            <person name="Holmstroem K."/>
            <person name="Jacq C."/>
            <person name="Jacquet M."/>
            <person name="Jauniaux J.-C."/>
            <person name="Jonniaux J.-L."/>
            <person name="Kallesoee T."/>
            <person name="Kiesau P."/>
            <person name="Kirchrath L."/>
            <person name="Koetter P."/>
            <person name="Korol S."/>
            <person name="Liebl S."/>
            <person name="Logghe M."/>
            <person name="Lohan A.J.E."/>
            <person name="Louis E.J."/>
            <person name="Li Z.Y."/>
            <person name="Maat M.J."/>
            <person name="Mallet L."/>
            <person name="Mannhaupt G."/>
            <person name="Messenguy F."/>
            <person name="Miosga T."/>
            <person name="Molemans F."/>
            <person name="Mueller S."/>
            <person name="Nasr F."/>
            <person name="Obermaier B."/>
            <person name="Perea J."/>
            <person name="Pierard A."/>
            <person name="Piravandi E."/>
            <person name="Pohl F.M."/>
            <person name="Pohl T.M."/>
            <person name="Potier S."/>
            <person name="Proft M."/>
            <person name="Purnelle B."/>
            <person name="Ramezani Rad M."/>
            <person name="Rieger M."/>
            <person name="Rose M."/>
            <person name="Schaaff-Gerstenschlaeger I."/>
            <person name="Scherens B."/>
            <person name="Schwarzlose C."/>
            <person name="Skala J."/>
            <person name="Slonimski P.P."/>
            <person name="Smits P.H.M."/>
            <person name="Souciet J.-L."/>
            <person name="Steensma H.Y."/>
            <person name="Stucka R."/>
            <person name="Urrestarazu L.A."/>
            <person name="van der Aart Q.J.M."/>
            <person name="Van Dyck L."/>
            <person name="Vassarotti A."/>
            <person name="Vetter I."/>
            <person name="Vierendeels F."/>
            <person name="Vissers S."/>
            <person name="Wagner G."/>
            <person name="de Wergifosse P."/>
            <person name="Wolfe K.H."/>
            <person name="Zagulski M."/>
            <person name="Zimmermann F.K."/>
            <person name="Mewes H.-W."/>
            <person name="Kleine K."/>
        </authorList>
    </citation>
    <scope>NUCLEOTIDE SEQUENCE [LARGE SCALE GENOMIC DNA]</scope>
    <source>
        <strain>ATCC 204508 / S288c</strain>
    </source>
</reference>
<reference key="2">
    <citation type="journal article" date="2014" name="G3 (Bethesda)">
        <title>The reference genome sequence of Saccharomyces cerevisiae: Then and now.</title>
        <authorList>
            <person name="Engel S.R."/>
            <person name="Dietrich F.S."/>
            <person name="Fisk D.G."/>
            <person name="Binkley G."/>
            <person name="Balakrishnan R."/>
            <person name="Costanzo M.C."/>
            <person name="Dwight S.S."/>
            <person name="Hitz B.C."/>
            <person name="Karra K."/>
            <person name="Nash R.S."/>
            <person name="Weng S."/>
            <person name="Wong E.D."/>
            <person name="Lloyd P."/>
            <person name="Skrzypek M.S."/>
            <person name="Miyasato S.R."/>
            <person name="Simison M."/>
            <person name="Cherry J.M."/>
        </authorList>
    </citation>
    <scope>GENOME REANNOTATION</scope>
    <source>
        <strain>ATCC 204508 / S288c</strain>
    </source>
</reference>
<reference key="3">
    <citation type="journal article" date="2003" name="Genome Res.">
        <title>Systematic discovery of new genes in the Saccharomyces cerevisiae genome.</title>
        <authorList>
            <person name="Kessler M.M."/>
            <person name="Zeng Q."/>
            <person name="Hogan S."/>
            <person name="Cook R."/>
            <person name="Morales A.J."/>
            <person name="Cottarel G."/>
        </authorList>
    </citation>
    <scope>GENOME REANNOTATION</scope>
</reference>
<organism>
    <name type="scientific">Saccharomyces cerevisiae (strain ATCC 204508 / S288c)</name>
    <name type="common">Baker's yeast</name>
    <dbReference type="NCBI Taxonomy" id="559292"/>
    <lineage>
        <taxon>Eukaryota</taxon>
        <taxon>Fungi</taxon>
        <taxon>Dikarya</taxon>
        <taxon>Ascomycota</taxon>
        <taxon>Saccharomycotina</taxon>
        <taxon>Saccharomycetes</taxon>
        <taxon>Saccharomycetales</taxon>
        <taxon>Saccharomycetaceae</taxon>
        <taxon>Saccharomyces</taxon>
    </lineage>
</organism>
<gene>
    <name type="ordered locus">YBL068W-A</name>
    <name type="ORF">smORF19</name>
    <name type="ORF">SR12</name>
</gene>